<dbReference type="GO" id="GO:0005576">
    <property type="term" value="C:extracellular region"/>
    <property type="evidence" value="ECO:0007669"/>
    <property type="project" value="UniProtKB-SubCell"/>
</dbReference>
<dbReference type="GO" id="GO:0090729">
    <property type="term" value="F:toxin activity"/>
    <property type="evidence" value="ECO:0007669"/>
    <property type="project" value="UniProtKB-KW"/>
</dbReference>
<reference key="1">
    <citation type="journal article" date="2007" name="J. Exp. Zool. B Mol. Dev. Evol.">
        <title>Venomous auger snail Hastula (Impages) hectica (Linnaeus, 1758): molecular phylogeny, foregut anatomy and comparative toxinology.</title>
        <authorList>
            <person name="Imperial J.S."/>
            <person name="Kantor Y."/>
            <person name="Watkins M."/>
            <person name="Heralde F.M. III"/>
            <person name="Stevenson B."/>
            <person name="Chen P."/>
            <person name="Hansson K."/>
            <person name="Stenflo J."/>
            <person name="Ownby J.P."/>
            <person name="Bouchet P."/>
            <person name="Olivera B.M."/>
        </authorList>
    </citation>
    <scope>PROTEIN SEQUENCE</scope>
    <source>
        <tissue>Venom</tissue>
    </source>
</reference>
<evidence type="ECO:0000250" key="1"/>
<keyword id="KW-0903">Direct protein sequencing</keyword>
<keyword id="KW-1015">Disulfide bond</keyword>
<keyword id="KW-0964">Secreted</keyword>
<keyword id="KW-0800">Toxin</keyword>
<feature type="chain" id="PRO_0000402151" description="Augerpeptide hheTx4">
    <location>
        <begin position="1"/>
        <end position="35"/>
    </location>
</feature>
<sequence length="35" mass="3952">NEVCPPGECQQYCCDLRKCKCINLSFYGLTCNCDS</sequence>
<accession>P0CI11</accession>
<protein>
    <recommendedName>
        <fullName>Augerpeptide hheTx4</fullName>
    </recommendedName>
</protein>
<proteinExistence type="evidence at protein level"/>
<comment type="subcellular location">
    <subcellularLocation>
        <location>Secreted</location>
    </subcellularLocation>
</comment>
<comment type="tissue specificity">
    <text>Expressed by the venom duct.</text>
</comment>
<comment type="domain">
    <text>The cysteine framework is XV (C-C-CC-C-C-C-C).</text>
</comment>
<comment type="PTM">
    <text evidence="1">Contains 4 disulfide bonds.</text>
</comment>
<organism>
    <name type="scientific">Hastula hectica</name>
    <name type="common">Sea snail</name>
    <name type="synonym">Impages hectica</name>
    <dbReference type="NCBI Taxonomy" id="745793"/>
    <lineage>
        <taxon>Eukaryota</taxon>
        <taxon>Metazoa</taxon>
        <taxon>Spiralia</taxon>
        <taxon>Lophotrochozoa</taxon>
        <taxon>Mollusca</taxon>
        <taxon>Gastropoda</taxon>
        <taxon>Caenogastropoda</taxon>
        <taxon>Neogastropoda</taxon>
        <taxon>Conoidea</taxon>
        <taxon>Terebridae</taxon>
        <taxon>Hastula</taxon>
    </lineage>
</organism>
<name>TEF4_HASHE</name>